<sequence length="94" mass="10234">MLQSNEYFSGKVKSIGFSSSSTGRASVGVMVEGEYTFSTAEPEEMTVISGALNVLLPDATDWQVYEAGSVFNVPGHSEFHLQVAEPTSYLCRYL</sequence>
<keyword id="KW-0328">Glycosyltransferase</keyword>
<keyword id="KW-0808">Transferase</keyword>
<feature type="chain" id="PRO_0000298693" description="Pyrimidine/purine nucleoside phosphorylase">
    <location>
        <begin position="1"/>
        <end position="94"/>
    </location>
</feature>
<gene>
    <name evidence="1" type="primary">ppnP</name>
    <name type="ordered locus">UTI89_C0411</name>
</gene>
<reference key="1">
    <citation type="journal article" date="2006" name="Proc. Natl. Acad. Sci. U.S.A.">
        <title>Identification of genes subject to positive selection in uropathogenic strains of Escherichia coli: a comparative genomics approach.</title>
        <authorList>
            <person name="Chen S.L."/>
            <person name="Hung C.-S."/>
            <person name="Xu J."/>
            <person name="Reigstad C.S."/>
            <person name="Magrini V."/>
            <person name="Sabo A."/>
            <person name="Blasiar D."/>
            <person name="Bieri T."/>
            <person name="Meyer R.R."/>
            <person name="Ozersky P."/>
            <person name="Armstrong J.R."/>
            <person name="Fulton R.S."/>
            <person name="Latreille J.P."/>
            <person name="Spieth J."/>
            <person name="Hooton T.M."/>
            <person name="Mardis E.R."/>
            <person name="Hultgren S.J."/>
            <person name="Gordon J.I."/>
        </authorList>
    </citation>
    <scope>NUCLEOTIDE SEQUENCE [LARGE SCALE GENOMIC DNA]</scope>
    <source>
        <strain>UTI89 / UPEC</strain>
    </source>
</reference>
<dbReference type="EC" id="2.4.2.1" evidence="1"/>
<dbReference type="EC" id="2.4.2.2" evidence="1"/>
<dbReference type="EMBL" id="CP000243">
    <property type="protein sequence ID" value="ABE05912.1"/>
    <property type="molecule type" value="Genomic_DNA"/>
</dbReference>
<dbReference type="RefSeq" id="WP_000941942.1">
    <property type="nucleotide sequence ID" value="NZ_CP064825.1"/>
</dbReference>
<dbReference type="SMR" id="Q1RFF2"/>
<dbReference type="GeneID" id="93777070"/>
<dbReference type="KEGG" id="eci:UTI89_C0411"/>
<dbReference type="HOGENOM" id="CLU_157874_0_0_6"/>
<dbReference type="Proteomes" id="UP000001952">
    <property type="component" value="Chromosome"/>
</dbReference>
<dbReference type="GO" id="GO:0005829">
    <property type="term" value="C:cytosol"/>
    <property type="evidence" value="ECO:0007669"/>
    <property type="project" value="TreeGrafter"/>
</dbReference>
<dbReference type="GO" id="GO:0047975">
    <property type="term" value="F:guanosine phosphorylase activity"/>
    <property type="evidence" value="ECO:0007669"/>
    <property type="project" value="UniProtKB-EC"/>
</dbReference>
<dbReference type="GO" id="GO:0004731">
    <property type="term" value="F:purine-nucleoside phosphorylase activity"/>
    <property type="evidence" value="ECO:0007669"/>
    <property type="project" value="UniProtKB-UniRule"/>
</dbReference>
<dbReference type="GO" id="GO:0009032">
    <property type="term" value="F:thymidine phosphorylase activity"/>
    <property type="evidence" value="ECO:0007669"/>
    <property type="project" value="UniProtKB-EC"/>
</dbReference>
<dbReference type="GO" id="GO:0004850">
    <property type="term" value="F:uridine phosphorylase activity"/>
    <property type="evidence" value="ECO:0007669"/>
    <property type="project" value="UniProtKB-EC"/>
</dbReference>
<dbReference type="CDD" id="cd20296">
    <property type="entry name" value="cupin_PpnP-like"/>
    <property type="match status" value="1"/>
</dbReference>
<dbReference type="FunFam" id="2.60.120.10:FF:000016">
    <property type="entry name" value="Pyrimidine/purine nucleoside phosphorylase"/>
    <property type="match status" value="1"/>
</dbReference>
<dbReference type="Gene3D" id="2.60.120.10">
    <property type="entry name" value="Jelly Rolls"/>
    <property type="match status" value="1"/>
</dbReference>
<dbReference type="HAMAP" id="MF_01537">
    <property type="entry name" value="Nucleos_phosphorylase_PpnP"/>
    <property type="match status" value="1"/>
</dbReference>
<dbReference type="InterPro" id="IPR009664">
    <property type="entry name" value="Ppnp"/>
</dbReference>
<dbReference type="InterPro" id="IPR014710">
    <property type="entry name" value="RmlC-like_jellyroll"/>
</dbReference>
<dbReference type="InterPro" id="IPR011051">
    <property type="entry name" value="RmlC_Cupin_sf"/>
</dbReference>
<dbReference type="NCBIfam" id="NF007875">
    <property type="entry name" value="PRK10579.1"/>
    <property type="match status" value="1"/>
</dbReference>
<dbReference type="PANTHER" id="PTHR36540">
    <property type="entry name" value="PYRIMIDINE/PURINE NUCLEOSIDE PHOSPHORYLASE"/>
    <property type="match status" value="1"/>
</dbReference>
<dbReference type="PANTHER" id="PTHR36540:SF1">
    <property type="entry name" value="PYRIMIDINE_PURINE NUCLEOSIDE PHOSPHORYLASE"/>
    <property type="match status" value="1"/>
</dbReference>
<dbReference type="Pfam" id="PF06865">
    <property type="entry name" value="Ppnp"/>
    <property type="match status" value="1"/>
</dbReference>
<dbReference type="SUPFAM" id="SSF51182">
    <property type="entry name" value="RmlC-like cupins"/>
    <property type="match status" value="1"/>
</dbReference>
<accession>Q1RFF2</accession>
<organism>
    <name type="scientific">Escherichia coli (strain UTI89 / UPEC)</name>
    <dbReference type="NCBI Taxonomy" id="364106"/>
    <lineage>
        <taxon>Bacteria</taxon>
        <taxon>Pseudomonadati</taxon>
        <taxon>Pseudomonadota</taxon>
        <taxon>Gammaproteobacteria</taxon>
        <taxon>Enterobacterales</taxon>
        <taxon>Enterobacteriaceae</taxon>
        <taxon>Escherichia</taxon>
    </lineage>
</organism>
<evidence type="ECO:0000255" key="1">
    <source>
        <dbReference type="HAMAP-Rule" id="MF_01537"/>
    </source>
</evidence>
<protein>
    <recommendedName>
        <fullName evidence="1">Pyrimidine/purine nucleoside phosphorylase</fullName>
        <ecNumber evidence="1">2.4.2.1</ecNumber>
        <ecNumber evidence="1">2.4.2.2</ecNumber>
    </recommendedName>
    <alternativeName>
        <fullName evidence="1">Adenosine phosphorylase</fullName>
    </alternativeName>
    <alternativeName>
        <fullName evidence="1">Cytidine phosphorylase</fullName>
    </alternativeName>
    <alternativeName>
        <fullName evidence="1">Guanosine phosphorylase</fullName>
    </alternativeName>
    <alternativeName>
        <fullName evidence="1">Inosine phosphorylase</fullName>
    </alternativeName>
    <alternativeName>
        <fullName evidence="1">Thymidine phosphorylase</fullName>
    </alternativeName>
    <alternativeName>
        <fullName evidence="1">Uridine phosphorylase</fullName>
    </alternativeName>
    <alternativeName>
        <fullName evidence="1">Xanthosine phosphorylase</fullName>
    </alternativeName>
</protein>
<proteinExistence type="inferred from homology"/>
<name>PPNP_ECOUT</name>
<comment type="function">
    <text evidence="1">Catalyzes the phosphorolysis of diverse nucleosides, yielding D-ribose 1-phosphate and the respective free bases. Can use uridine, adenosine, guanosine, cytidine, thymidine, inosine and xanthosine as substrates. Also catalyzes the reverse reactions.</text>
</comment>
<comment type="catalytic activity">
    <reaction evidence="1">
        <text>a purine D-ribonucleoside + phosphate = a purine nucleobase + alpha-D-ribose 1-phosphate</text>
        <dbReference type="Rhea" id="RHEA:19805"/>
        <dbReference type="ChEBI" id="CHEBI:26386"/>
        <dbReference type="ChEBI" id="CHEBI:43474"/>
        <dbReference type="ChEBI" id="CHEBI:57720"/>
        <dbReference type="ChEBI" id="CHEBI:142355"/>
        <dbReference type="EC" id="2.4.2.1"/>
    </reaction>
</comment>
<comment type="catalytic activity">
    <reaction evidence="1">
        <text>adenosine + phosphate = alpha-D-ribose 1-phosphate + adenine</text>
        <dbReference type="Rhea" id="RHEA:27642"/>
        <dbReference type="ChEBI" id="CHEBI:16335"/>
        <dbReference type="ChEBI" id="CHEBI:16708"/>
        <dbReference type="ChEBI" id="CHEBI:43474"/>
        <dbReference type="ChEBI" id="CHEBI:57720"/>
        <dbReference type="EC" id="2.4.2.1"/>
    </reaction>
</comment>
<comment type="catalytic activity">
    <reaction evidence="1">
        <text>cytidine + phosphate = cytosine + alpha-D-ribose 1-phosphate</text>
        <dbReference type="Rhea" id="RHEA:52540"/>
        <dbReference type="ChEBI" id="CHEBI:16040"/>
        <dbReference type="ChEBI" id="CHEBI:17562"/>
        <dbReference type="ChEBI" id="CHEBI:43474"/>
        <dbReference type="ChEBI" id="CHEBI:57720"/>
        <dbReference type="EC" id="2.4.2.2"/>
    </reaction>
</comment>
<comment type="catalytic activity">
    <reaction evidence="1">
        <text>guanosine + phosphate = alpha-D-ribose 1-phosphate + guanine</text>
        <dbReference type="Rhea" id="RHEA:13233"/>
        <dbReference type="ChEBI" id="CHEBI:16235"/>
        <dbReference type="ChEBI" id="CHEBI:16750"/>
        <dbReference type="ChEBI" id="CHEBI:43474"/>
        <dbReference type="ChEBI" id="CHEBI:57720"/>
        <dbReference type="EC" id="2.4.2.1"/>
    </reaction>
</comment>
<comment type="catalytic activity">
    <reaction evidence="1">
        <text>inosine + phosphate = alpha-D-ribose 1-phosphate + hypoxanthine</text>
        <dbReference type="Rhea" id="RHEA:27646"/>
        <dbReference type="ChEBI" id="CHEBI:17368"/>
        <dbReference type="ChEBI" id="CHEBI:17596"/>
        <dbReference type="ChEBI" id="CHEBI:43474"/>
        <dbReference type="ChEBI" id="CHEBI:57720"/>
        <dbReference type="EC" id="2.4.2.1"/>
    </reaction>
</comment>
<comment type="catalytic activity">
    <reaction evidence="1">
        <text>thymidine + phosphate = 2-deoxy-alpha-D-ribose 1-phosphate + thymine</text>
        <dbReference type="Rhea" id="RHEA:16037"/>
        <dbReference type="ChEBI" id="CHEBI:17748"/>
        <dbReference type="ChEBI" id="CHEBI:17821"/>
        <dbReference type="ChEBI" id="CHEBI:43474"/>
        <dbReference type="ChEBI" id="CHEBI:57259"/>
        <dbReference type="EC" id="2.4.2.2"/>
    </reaction>
</comment>
<comment type="catalytic activity">
    <reaction evidence="1">
        <text>uridine + phosphate = alpha-D-ribose 1-phosphate + uracil</text>
        <dbReference type="Rhea" id="RHEA:24388"/>
        <dbReference type="ChEBI" id="CHEBI:16704"/>
        <dbReference type="ChEBI" id="CHEBI:17568"/>
        <dbReference type="ChEBI" id="CHEBI:43474"/>
        <dbReference type="ChEBI" id="CHEBI:57720"/>
        <dbReference type="EC" id="2.4.2.2"/>
    </reaction>
</comment>
<comment type="catalytic activity">
    <reaction evidence="1">
        <text>xanthosine + phosphate = alpha-D-ribose 1-phosphate + xanthine</text>
        <dbReference type="Rhea" id="RHEA:27638"/>
        <dbReference type="ChEBI" id="CHEBI:17712"/>
        <dbReference type="ChEBI" id="CHEBI:18107"/>
        <dbReference type="ChEBI" id="CHEBI:43474"/>
        <dbReference type="ChEBI" id="CHEBI:57720"/>
        <dbReference type="EC" id="2.4.2.1"/>
    </reaction>
</comment>
<comment type="similarity">
    <text evidence="1">Belongs to the nucleoside phosphorylase PpnP family.</text>
</comment>